<protein>
    <recommendedName>
        <fullName>Protein unc-119 homolog B-A</fullName>
    </recommendedName>
</protein>
<evidence type="ECO:0000250" key="1"/>
<evidence type="ECO:0000250" key="2">
    <source>
        <dbReference type="UniProtKB" id="Q13432"/>
    </source>
</evidence>
<evidence type="ECO:0000250" key="3">
    <source>
        <dbReference type="UniProtKB" id="Q9Z2R6"/>
    </source>
</evidence>
<evidence type="ECO:0000256" key="4">
    <source>
        <dbReference type="SAM" id="MobiDB-lite"/>
    </source>
</evidence>
<evidence type="ECO:0000305" key="5"/>
<name>U19BA_XENLA</name>
<proteinExistence type="evidence at transcript level"/>
<keyword id="KW-0970">Cilium biogenesis/degradation</keyword>
<keyword id="KW-0446">Lipid-binding</keyword>
<keyword id="KW-0653">Protein transport</keyword>
<keyword id="KW-1185">Reference proteome</keyword>
<keyword id="KW-0813">Transport</keyword>
<organism>
    <name type="scientific">Xenopus laevis</name>
    <name type="common">African clawed frog</name>
    <dbReference type="NCBI Taxonomy" id="8355"/>
    <lineage>
        <taxon>Eukaryota</taxon>
        <taxon>Metazoa</taxon>
        <taxon>Chordata</taxon>
        <taxon>Craniata</taxon>
        <taxon>Vertebrata</taxon>
        <taxon>Euteleostomi</taxon>
        <taxon>Amphibia</taxon>
        <taxon>Batrachia</taxon>
        <taxon>Anura</taxon>
        <taxon>Pipoidea</taxon>
        <taxon>Pipidae</taxon>
        <taxon>Xenopodinae</taxon>
        <taxon>Xenopus</taxon>
        <taxon>Xenopus</taxon>
    </lineage>
</organism>
<comment type="function">
    <text evidence="2 3">Myristoyl-binding protein that acts as a cargo adapter: specifically binds the myristoyl moiety of a subset of N-terminally myristoylated proteins and is required for their localization. Plays a key role in localization of proteins to the primary cilium membrane (By similarity).</text>
</comment>
<comment type="domain">
    <text evidence="2">Adopts an immunoglobulin-like beta-sandwich fold forming a hydrophobic cavity that captures N-terminally myristoylated target peptides. Phe residues within the hydrophobic beta sandwich are required for myristate binding (By similarity).</text>
</comment>
<comment type="similarity">
    <text evidence="5">Belongs to the PDE6D/unc-119 family.</text>
</comment>
<accession>Q66JA9</accession>
<feature type="chain" id="PRO_0000337231" description="Protein unc-119 homolog B-A">
    <location>
        <begin position="1"/>
        <end position="242"/>
    </location>
</feature>
<feature type="region of interest" description="Disordered" evidence="4">
    <location>
        <begin position="1"/>
        <end position="49"/>
    </location>
</feature>
<feature type="compositionally biased region" description="Basic and acidic residues" evidence="4">
    <location>
        <begin position="1"/>
        <end position="20"/>
    </location>
</feature>
<feature type="compositionally biased region" description="Polar residues" evidence="4">
    <location>
        <begin position="38"/>
        <end position="48"/>
    </location>
</feature>
<feature type="binding site" evidence="1">
    <location>
        <position position="133"/>
    </location>
    <ligand>
        <name>tetradecanoate</name>
        <dbReference type="ChEBI" id="CHEBI:30807"/>
    </ligand>
</feature>
<sequence length="242" mass="28004">MSGSKREAALTGQPKDERKKSGGGVINRLKARRVQGKESGTSDQSSVTPFREEELLGLNQLRPEHVLGLSRVTENYLCKPEDNIYGIDFTRFKIRDLETGTVLFEISKPCSEQEEEEEESTHLDASAGRFVRYQFTPAFLRLRKVGATVEFTVGDKPVKSFRMIERHYFRDHILKSFDFDFGFCIPNSRNTCEHMYEFPQLSEELIRQMTENPYETRSDSFYFVDNKLIMHNKADYAYNGGH</sequence>
<dbReference type="EMBL" id="BC080993">
    <property type="protein sequence ID" value="AAH80993.1"/>
    <property type="molecule type" value="mRNA"/>
</dbReference>
<dbReference type="RefSeq" id="NP_001087608.1">
    <property type="nucleotide sequence ID" value="NM_001094139.1"/>
</dbReference>
<dbReference type="DNASU" id="447432"/>
<dbReference type="GeneID" id="447432"/>
<dbReference type="KEGG" id="xla:447432"/>
<dbReference type="AGR" id="Xenbase:XB-GENE-17343734"/>
<dbReference type="CTD" id="447432"/>
<dbReference type="OrthoDB" id="10248777at2759"/>
<dbReference type="Proteomes" id="UP000186698">
    <property type="component" value="Chromosome 1L"/>
</dbReference>
<dbReference type="Bgee" id="447432">
    <property type="expression patterns" value="Expressed in blastula and 19 other cell types or tissues"/>
</dbReference>
<dbReference type="GO" id="GO:0035869">
    <property type="term" value="C:ciliary transition zone"/>
    <property type="evidence" value="ECO:0000250"/>
    <property type="project" value="UniProtKB"/>
</dbReference>
<dbReference type="GO" id="GO:0005929">
    <property type="term" value="C:cilium"/>
    <property type="evidence" value="ECO:0000318"/>
    <property type="project" value="GO_Central"/>
</dbReference>
<dbReference type="GO" id="GO:0008289">
    <property type="term" value="F:lipid binding"/>
    <property type="evidence" value="ECO:0000250"/>
    <property type="project" value="UniProtKB"/>
</dbReference>
<dbReference type="GO" id="GO:0060271">
    <property type="term" value="P:cilium assembly"/>
    <property type="evidence" value="ECO:0000318"/>
    <property type="project" value="GO_Central"/>
</dbReference>
<dbReference type="GO" id="GO:0042953">
    <property type="term" value="P:lipoprotein transport"/>
    <property type="evidence" value="ECO:0000250"/>
    <property type="project" value="UniProtKB"/>
</dbReference>
<dbReference type="GO" id="GO:0007399">
    <property type="term" value="P:nervous system development"/>
    <property type="evidence" value="ECO:0000318"/>
    <property type="project" value="GO_Central"/>
</dbReference>
<dbReference type="FunFam" id="2.70.50.40:FF:000001">
    <property type="entry name" value="protein unc-119 homolog A"/>
    <property type="match status" value="1"/>
</dbReference>
<dbReference type="Gene3D" id="2.70.50.40">
    <property type="entry name" value="GMP phosphodiesterase, delta subunit"/>
    <property type="match status" value="1"/>
</dbReference>
<dbReference type="InterPro" id="IPR014756">
    <property type="entry name" value="Ig_E-set"/>
</dbReference>
<dbReference type="InterPro" id="IPR051519">
    <property type="entry name" value="PDE6D_unc-119_myristoyl-bd"/>
</dbReference>
<dbReference type="InterPro" id="IPR008015">
    <property type="entry name" value="PDED_dom"/>
</dbReference>
<dbReference type="InterPro" id="IPR037036">
    <property type="entry name" value="PDED_dom_sf"/>
</dbReference>
<dbReference type="PANTHER" id="PTHR12951:SF3">
    <property type="entry name" value="PROTEIN UNC-119 HOMOLOG B"/>
    <property type="match status" value="1"/>
</dbReference>
<dbReference type="PANTHER" id="PTHR12951">
    <property type="entry name" value="RETINAL PROTEIN 4"/>
    <property type="match status" value="1"/>
</dbReference>
<dbReference type="Pfam" id="PF05351">
    <property type="entry name" value="GMP_PDE_delta"/>
    <property type="match status" value="1"/>
</dbReference>
<dbReference type="SUPFAM" id="SSF81296">
    <property type="entry name" value="E set domains"/>
    <property type="match status" value="1"/>
</dbReference>
<gene>
    <name type="primary">unc119b-a</name>
</gene>
<reference key="1">
    <citation type="submission" date="2004-08" db="EMBL/GenBank/DDBJ databases">
        <authorList>
            <consortium name="NIH - Xenopus Gene Collection (XGC) project"/>
        </authorList>
    </citation>
    <scope>NUCLEOTIDE SEQUENCE [LARGE SCALE MRNA]</scope>
    <source>
        <tissue>Kidney</tissue>
    </source>
</reference>